<organism>
    <name type="scientific">Streptococcus agalactiae serotype V (strain ATCC BAA-611 / 2603 V/R)</name>
    <dbReference type="NCBI Taxonomy" id="208435"/>
    <lineage>
        <taxon>Bacteria</taxon>
        <taxon>Bacillati</taxon>
        <taxon>Bacillota</taxon>
        <taxon>Bacilli</taxon>
        <taxon>Lactobacillales</taxon>
        <taxon>Streptococcaceae</taxon>
        <taxon>Streptococcus</taxon>
    </lineage>
</organism>
<keyword id="KW-0066">ATP synthesis</keyword>
<keyword id="KW-1003">Cell membrane</keyword>
<keyword id="KW-0139">CF(1)</keyword>
<keyword id="KW-0375">Hydrogen ion transport</keyword>
<keyword id="KW-0406">Ion transport</keyword>
<keyword id="KW-0472">Membrane</keyword>
<keyword id="KW-1185">Reference proteome</keyword>
<keyword id="KW-0813">Transport</keyword>
<evidence type="ECO:0000255" key="1">
    <source>
        <dbReference type="HAMAP-Rule" id="MF_00815"/>
    </source>
</evidence>
<dbReference type="EMBL" id="AE009948">
    <property type="protein sequence ID" value="AAM99748.1"/>
    <property type="molecule type" value="Genomic_DNA"/>
</dbReference>
<dbReference type="RefSeq" id="NP_687876.1">
    <property type="nucleotide sequence ID" value="NC_004116.1"/>
</dbReference>
<dbReference type="RefSeq" id="WP_000919085.1">
    <property type="nucleotide sequence ID" value="NC_004116.1"/>
</dbReference>
<dbReference type="SMR" id="Q8E073"/>
<dbReference type="STRING" id="208435.SAG0862"/>
<dbReference type="KEGG" id="sag:SAG0862"/>
<dbReference type="PATRIC" id="fig|208435.3.peg.869"/>
<dbReference type="HOGENOM" id="CLU_050669_0_1_9"/>
<dbReference type="OrthoDB" id="9812769at2"/>
<dbReference type="Proteomes" id="UP000000821">
    <property type="component" value="Chromosome"/>
</dbReference>
<dbReference type="GO" id="GO:0005886">
    <property type="term" value="C:plasma membrane"/>
    <property type="evidence" value="ECO:0007669"/>
    <property type="project" value="UniProtKB-SubCell"/>
</dbReference>
<dbReference type="GO" id="GO:0045259">
    <property type="term" value="C:proton-transporting ATP synthase complex"/>
    <property type="evidence" value="ECO:0007669"/>
    <property type="project" value="UniProtKB-KW"/>
</dbReference>
<dbReference type="GO" id="GO:0005524">
    <property type="term" value="F:ATP binding"/>
    <property type="evidence" value="ECO:0007669"/>
    <property type="project" value="UniProtKB-UniRule"/>
</dbReference>
<dbReference type="GO" id="GO:0046933">
    <property type="term" value="F:proton-transporting ATP synthase activity, rotational mechanism"/>
    <property type="evidence" value="ECO:0007669"/>
    <property type="project" value="UniProtKB-UniRule"/>
</dbReference>
<dbReference type="GO" id="GO:0042777">
    <property type="term" value="P:proton motive force-driven plasma membrane ATP synthesis"/>
    <property type="evidence" value="ECO:0007669"/>
    <property type="project" value="UniProtKB-UniRule"/>
</dbReference>
<dbReference type="CDD" id="cd12151">
    <property type="entry name" value="F1-ATPase_gamma"/>
    <property type="match status" value="1"/>
</dbReference>
<dbReference type="FunFam" id="3.40.1380.10:FF:000002">
    <property type="entry name" value="ATP synthase gamma chain"/>
    <property type="match status" value="1"/>
</dbReference>
<dbReference type="Gene3D" id="3.40.1380.10">
    <property type="match status" value="1"/>
</dbReference>
<dbReference type="Gene3D" id="1.10.287.80">
    <property type="entry name" value="ATP synthase, gamma subunit, helix hairpin domain"/>
    <property type="match status" value="1"/>
</dbReference>
<dbReference type="HAMAP" id="MF_00815">
    <property type="entry name" value="ATP_synth_gamma_bact"/>
    <property type="match status" value="1"/>
</dbReference>
<dbReference type="InterPro" id="IPR035968">
    <property type="entry name" value="ATP_synth_F1_ATPase_gsu"/>
</dbReference>
<dbReference type="InterPro" id="IPR000131">
    <property type="entry name" value="ATP_synth_F1_gsu"/>
</dbReference>
<dbReference type="InterPro" id="IPR023632">
    <property type="entry name" value="ATP_synth_F1_gsu_CS"/>
</dbReference>
<dbReference type="NCBIfam" id="TIGR01146">
    <property type="entry name" value="ATPsyn_F1gamma"/>
    <property type="match status" value="1"/>
</dbReference>
<dbReference type="NCBIfam" id="NF004147">
    <property type="entry name" value="PRK05621.2-1"/>
    <property type="match status" value="1"/>
</dbReference>
<dbReference type="PANTHER" id="PTHR11693">
    <property type="entry name" value="ATP SYNTHASE GAMMA CHAIN"/>
    <property type="match status" value="1"/>
</dbReference>
<dbReference type="PANTHER" id="PTHR11693:SF22">
    <property type="entry name" value="ATP SYNTHASE SUBUNIT GAMMA, MITOCHONDRIAL"/>
    <property type="match status" value="1"/>
</dbReference>
<dbReference type="Pfam" id="PF00231">
    <property type="entry name" value="ATP-synt"/>
    <property type="match status" value="1"/>
</dbReference>
<dbReference type="PRINTS" id="PR00126">
    <property type="entry name" value="ATPASEGAMMA"/>
</dbReference>
<dbReference type="SUPFAM" id="SSF52943">
    <property type="entry name" value="ATP synthase (F1-ATPase), gamma subunit"/>
    <property type="match status" value="1"/>
</dbReference>
<dbReference type="PROSITE" id="PS00153">
    <property type="entry name" value="ATPASE_GAMMA"/>
    <property type="match status" value="1"/>
</dbReference>
<proteinExistence type="inferred from homology"/>
<feature type="chain" id="PRO_0000073384" description="ATP synthase gamma chain">
    <location>
        <begin position="1"/>
        <end position="293"/>
    </location>
</feature>
<comment type="function">
    <text evidence="1">Produces ATP from ADP in the presence of a proton gradient across the membrane. The gamma chain is believed to be important in regulating ATPase activity and the flow of protons through the CF(0) complex.</text>
</comment>
<comment type="subunit">
    <text evidence="1">F-type ATPases have 2 components, CF(1) - the catalytic core - and CF(0) - the membrane proton channel. CF(1) has five subunits: alpha(3), beta(3), gamma(1), delta(1), epsilon(1). CF(0) has three main subunits: a, b and c.</text>
</comment>
<comment type="subcellular location">
    <subcellularLocation>
        <location evidence="1">Cell membrane</location>
        <topology evidence="1">Peripheral membrane protein</topology>
    </subcellularLocation>
</comment>
<comment type="similarity">
    <text evidence="1">Belongs to the ATPase gamma chain family.</text>
</comment>
<protein>
    <recommendedName>
        <fullName evidence="1">ATP synthase gamma chain</fullName>
    </recommendedName>
    <alternativeName>
        <fullName evidence="1">ATP synthase F1 sector gamma subunit</fullName>
    </alternativeName>
    <alternativeName>
        <fullName evidence="1">F-ATPase gamma subunit</fullName>
    </alternativeName>
</protein>
<gene>
    <name evidence="1" type="primary">atpG</name>
    <name type="ordered locus">SAG0862</name>
</gene>
<reference key="1">
    <citation type="journal article" date="2002" name="Proc. Natl. Acad. Sci. U.S.A.">
        <title>Complete genome sequence and comparative genomic analysis of an emerging human pathogen, serotype V Streptococcus agalactiae.</title>
        <authorList>
            <person name="Tettelin H."/>
            <person name="Masignani V."/>
            <person name="Cieslewicz M.J."/>
            <person name="Eisen J.A."/>
            <person name="Peterson S.N."/>
            <person name="Wessels M.R."/>
            <person name="Paulsen I.T."/>
            <person name="Nelson K.E."/>
            <person name="Margarit I."/>
            <person name="Read T.D."/>
            <person name="Madoff L.C."/>
            <person name="Wolf A.M."/>
            <person name="Beanan M.J."/>
            <person name="Brinkac L.M."/>
            <person name="Daugherty S.C."/>
            <person name="DeBoy R.T."/>
            <person name="Durkin A.S."/>
            <person name="Kolonay J.F."/>
            <person name="Madupu R."/>
            <person name="Lewis M.R."/>
            <person name="Radune D."/>
            <person name="Fedorova N.B."/>
            <person name="Scanlan D."/>
            <person name="Khouri H.M."/>
            <person name="Mulligan S."/>
            <person name="Carty H.A."/>
            <person name="Cline R.T."/>
            <person name="Van Aken S.E."/>
            <person name="Gill J."/>
            <person name="Scarselli M."/>
            <person name="Mora M."/>
            <person name="Iacobini E.T."/>
            <person name="Brettoni C."/>
            <person name="Galli G."/>
            <person name="Mariani M."/>
            <person name="Vegni F."/>
            <person name="Maione D."/>
            <person name="Rinaudo D."/>
            <person name="Rappuoli R."/>
            <person name="Telford J.L."/>
            <person name="Kasper D.L."/>
            <person name="Grandi G."/>
            <person name="Fraser C.M."/>
        </authorList>
    </citation>
    <scope>NUCLEOTIDE SEQUENCE [LARGE SCALE GENOMIC DNA]</scope>
    <source>
        <strain>ATCC BAA-611 / 2603 V/R</strain>
    </source>
</reference>
<sequence length="293" mass="32399">MAGSLSEIKDKILSTEKTSKITSAMQMVSSAKLVKSEQAARDFQVYASKIRQITTNLLKSDLVSGSDNPMLSSRPVKKTGYIVITSDKGLVGGYNSKILKAMMDTITDYHTENDDYAIISIGSVGSDFFKARGMNVSFELRGLEDQPSFDQVGKIIAQAVEMYKNELFDELYVCYNHHVNSLTSQVRMQQMLPIKELDAEEASEDRVITGFELEPNREVILEQLLPQYTESLIYGAIIDAKTAEHAAGMTAMQTATDNAKNVINDLTIQYNRARQAAITQEITEIVAGANALE</sequence>
<accession>Q8E073</accession>
<name>ATPG_STRA5</name>